<name>RLF25_ARATH</name>
<reference key="1">
    <citation type="journal article" date="2000" name="DNA Res.">
        <title>Structural analysis of Arabidopsis thaliana chromosome 3. I. Sequence features of the regions of 4,504,864 bp covered by sixty P1 and TAC clones.</title>
        <authorList>
            <person name="Sato S."/>
            <person name="Nakamura Y."/>
            <person name="Kaneko T."/>
            <person name="Katoh T."/>
            <person name="Asamizu E."/>
            <person name="Tabata S."/>
        </authorList>
    </citation>
    <scope>NUCLEOTIDE SEQUENCE [LARGE SCALE GENOMIC DNA]</scope>
    <source>
        <strain>cv. Columbia</strain>
    </source>
</reference>
<reference key="2">
    <citation type="journal article" date="2017" name="Plant J.">
        <title>Araport11: a complete reannotation of the Arabidopsis thaliana reference genome.</title>
        <authorList>
            <person name="Cheng C.Y."/>
            <person name="Krishnakumar V."/>
            <person name="Chan A.P."/>
            <person name="Thibaud-Nissen F."/>
            <person name="Schobel S."/>
            <person name="Town C.D."/>
        </authorList>
    </citation>
    <scope>GENOME REANNOTATION</scope>
    <source>
        <strain>cv. Columbia</strain>
    </source>
</reference>
<reference key="3">
    <citation type="submission" date="2002-03" db="EMBL/GenBank/DDBJ databases">
        <title>Full-length cDNA from Arabidopsis thaliana.</title>
        <authorList>
            <person name="Brover V.V."/>
            <person name="Troukhan M.E."/>
            <person name="Alexandrov N.A."/>
            <person name="Lu Y.-P."/>
            <person name="Flavell R.B."/>
            <person name="Feldmann K.A."/>
        </authorList>
    </citation>
    <scope>NUCLEOTIDE SEQUENCE [LARGE SCALE MRNA]</scope>
</reference>
<reference key="4">
    <citation type="journal article" date="2002" name="In Silico Biol.">
        <title>Peptomics, identification of novel cationic Arabidopsis peptides with conserved sequence motifs.</title>
        <authorList>
            <person name="Olsen A.N."/>
            <person name="Mundy J."/>
            <person name="Skriver K."/>
        </authorList>
    </citation>
    <scope>GENE FAMILY</scope>
    <scope>NOMENCLATURE</scope>
</reference>
<keyword id="KW-1015">Disulfide bond</keyword>
<keyword id="KW-0372">Hormone</keyword>
<keyword id="KW-1185">Reference proteome</keyword>
<keyword id="KW-0964">Secreted</keyword>
<keyword id="KW-0732">Signal</keyword>
<sequence>MKTFMIILLVICSILIVGRVEANDNKRKYLLLDPCLRPNAPPGCHRQPYKPRTPVNVYSRGCTTINRCRRVQNP</sequence>
<organism>
    <name type="scientific">Arabidopsis thaliana</name>
    <name type="common">Mouse-ear cress</name>
    <dbReference type="NCBI Taxonomy" id="3702"/>
    <lineage>
        <taxon>Eukaryota</taxon>
        <taxon>Viridiplantae</taxon>
        <taxon>Streptophyta</taxon>
        <taxon>Embryophyta</taxon>
        <taxon>Tracheophyta</taxon>
        <taxon>Spermatophyta</taxon>
        <taxon>Magnoliopsida</taxon>
        <taxon>eudicotyledons</taxon>
        <taxon>Gunneridae</taxon>
        <taxon>Pentapetalae</taxon>
        <taxon>rosids</taxon>
        <taxon>malvids</taxon>
        <taxon>Brassicales</taxon>
        <taxon>Brassicaceae</taxon>
        <taxon>Camelineae</taxon>
        <taxon>Arabidopsis</taxon>
    </lineage>
</organism>
<accession>Q9LSG0</accession>
<comment type="function">
    <text evidence="1">Cell signaling peptide that may regulate plant stress, growth, and development. Mediates a rapid alkalinization of extracellular space by mediating a transient increase in the cytoplasmic Ca(2+) concentration leading to a calcium-dependent signaling events through a cell surface receptor and a concomitant activation of some intracellular mitogen-activated protein kinases (By similarity).</text>
</comment>
<comment type="subcellular location">
    <subcellularLocation>
        <location evidence="1">Secreted</location>
    </subcellularLocation>
</comment>
<comment type="similarity">
    <text evidence="3">Belongs to the plant rapid alkalinization factor (RALF) family.</text>
</comment>
<feature type="signal peptide" evidence="2">
    <location>
        <begin position="1"/>
        <end position="22"/>
    </location>
</feature>
<feature type="chain" id="PRO_0000420322" description="Protein RALF-like 25">
    <location>
        <begin position="23"/>
        <end position="74"/>
    </location>
</feature>
<feature type="disulfide bond" evidence="1">
    <location>
        <begin position="35"/>
        <end position="44"/>
    </location>
</feature>
<feature type="disulfide bond" evidence="1">
    <location>
        <begin position="62"/>
        <end position="68"/>
    </location>
</feature>
<protein>
    <recommendedName>
        <fullName>Protein RALF-like 25</fullName>
    </recommendedName>
</protein>
<proteinExistence type="inferred from homology"/>
<gene>
    <name type="primary">RALFL25</name>
    <name type="ordered locus">At3g25165</name>
    <name type="ORF">MJL12.11</name>
</gene>
<dbReference type="EMBL" id="AB026647">
    <property type="protein sequence ID" value="BAB02075.1"/>
    <property type="molecule type" value="Genomic_DNA"/>
</dbReference>
<dbReference type="EMBL" id="CP002686">
    <property type="protein sequence ID" value="AEE76987.1"/>
    <property type="molecule type" value="Genomic_DNA"/>
</dbReference>
<dbReference type="EMBL" id="AY087907">
    <property type="protein sequence ID" value="AAM65458.1"/>
    <property type="molecule type" value="mRNA"/>
</dbReference>
<dbReference type="RefSeq" id="NP_566760.1">
    <property type="nucleotide sequence ID" value="NM_113421.2"/>
</dbReference>
<dbReference type="SMR" id="Q9LSG0"/>
<dbReference type="STRING" id="3702.Q9LSG0"/>
<dbReference type="PaxDb" id="3702-AT3G25165.1"/>
<dbReference type="ProteomicsDB" id="228158"/>
<dbReference type="EnsemblPlants" id="AT3G25165.1">
    <property type="protein sequence ID" value="AT3G25165.1"/>
    <property type="gene ID" value="AT3G25165"/>
</dbReference>
<dbReference type="GeneID" id="822108"/>
<dbReference type="Gramene" id="AT3G25165.1">
    <property type="protein sequence ID" value="AT3G25165.1"/>
    <property type="gene ID" value="AT3G25165"/>
</dbReference>
<dbReference type="KEGG" id="ath:AT3G25165"/>
<dbReference type="Araport" id="AT3G25165"/>
<dbReference type="TAIR" id="AT3G25165">
    <property type="gene designation" value="RALFL25"/>
</dbReference>
<dbReference type="eggNOG" id="ENOG502SYWJ">
    <property type="taxonomic scope" value="Eukaryota"/>
</dbReference>
<dbReference type="HOGENOM" id="CLU_200725_0_0_1"/>
<dbReference type="InParanoid" id="Q9LSG0"/>
<dbReference type="OMA" id="RGCTTIN"/>
<dbReference type="OrthoDB" id="1026644at2759"/>
<dbReference type="PhylomeDB" id="Q9LSG0"/>
<dbReference type="PRO" id="PR:Q9LSG0"/>
<dbReference type="Proteomes" id="UP000006548">
    <property type="component" value="Chromosome 3"/>
</dbReference>
<dbReference type="ExpressionAtlas" id="Q9LSG0">
    <property type="expression patterns" value="baseline and differential"/>
</dbReference>
<dbReference type="GO" id="GO:0048046">
    <property type="term" value="C:apoplast"/>
    <property type="evidence" value="ECO:0000250"/>
    <property type="project" value="TAIR"/>
</dbReference>
<dbReference type="GO" id="GO:0005179">
    <property type="term" value="F:hormone activity"/>
    <property type="evidence" value="ECO:0000250"/>
    <property type="project" value="UniProtKB"/>
</dbReference>
<dbReference type="GO" id="GO:0019722">
    <property type="term" value="P:calcium-mediated signaling"/>
    <property type="evidence" value="ECO:0000250"/>
    <property type="project" value="UniProtKB"/>
</dbReference>
<dbReference type="GO" id="GO:0007267">
    <property type="term" value="P:cell-cell signaling"/>
    <property type="evidence" value="ECO:0000250"/>
    <property type="project" value="TAIR"/>
</dbReference>
<dbReference type="GO" id="GO:0040008">
    <property type="term" value="P:regulation of growth"/>
    <property type="evidence" value="ECO:0007669"/>
    <property type="project" value="UniProtKB-ARBA"/>
</dbReference>
<dbReference type="InterPro" id="IPR008801">
    <property type="entry name" value="RALF"/>
</dbReference>
<dbReference type="PANTHER" id="PTHR34270:SF5">
    <property type="entry name" value="PROTEIN RALF-LIKE 10-RELATED"/>
    <property type="match status" value="1"/>
</dbReference>
<dbReference type="PANTHER" id="PTHR34270">
    <property type="entry name" value="PROTEIN RALF-LIKE 15-RELATED"/>
    <property type="match status" value="1"/>
</dbReference>
<dbReference type="Pfam" id="PF05498">
    <property type="entry name" value="RALF"/>
    <property type="match status" value="1"/>
</dbReference>
<evidence type="ECO:0000250" key="1"/>
<evidence type="ECO:0000255" key="2"/>
<evidence type="ECO:0000305" key="3"/>